<feature type="chain" id="PRO_1000008829" description="Elongation factor G">
    <location>
        <begin position="1"/>
        <end position="700"/>
    </location>
</feature>
<feature type="domain" description="tr-type G">
    <location>
        <begin position="8"/>
        <end position="290"/>
    </location>
</feature>
<feature type="binding site" evidence="1">
    <location>
        <begin position="17"/>
        <end position="24"/>
    </location>
    <ligand>
        <name>GTP</name>
        <dbReference type="ChEBI" id="CHEBI:37565"/>
    </ligand>
</feature>
<feature type="binding site" evidence="1">
    <location>
        <begin position="88"/>
        <end position="92"/>
    </location>
    <ligand>
        <name>GTP</name>
        <dbReference type="ChEBI" id="CHEBI:37565"/>
    </ligand>
</feature>
<feature type="binding site" evidence="1">
    <location>
        <begin position="142"/>
        <end position="145"/>
    </location>
    <ligand>
        <name>GTP</name>
        <dbReference type="ChEBI" id="CHEBI:37565"/>
    </ligand>
</feature>
<evidence type="ECO:0000255" key="1">
    <source>
        <dbReference type="HAMAP-Rule" id="MF_00054"/>
    </source>
</evidence>
<sequence>MARTTPIERYRNIGISAHIDAGKTTTTERILFYTGVSHKIGEVHDGAATMDWMEQEQERGITITSAATTAFWSGMSQQFPQHRINVIDTPGHVDFTVEVERSMRVLDGAVMVYCAVGGVQPQSETVWRQANKYEVPRIAFVNKMDRTGANFLRVVEQLKTRLGANAIPLQLPVGAEENFTGVVDLIKMKAINWNEADQGMTFTYEEVPANMQADCEEWRQNLVEAAAEASEELMEKYLGGEDLTEEEIKSALRQRVLANEIILVTCGSAFKNKGVQAMLDAVVEYLPAPTDIPAIKGINPDETEGERHASDEEPFSSLAFKIATDPFVGNLTFFRVYSGVINSGDTVLNSVRQKRERFGRIVQMHANKREEIKEVRAGDIAAAIGLKDVTTGDTLCAIDAPIILERMEFPEPVISVAVEPKTKADQEKMGLALGRLAQEDPSFRVHTDEESGETIISGMGELHLDIIVDRMKREFKVEANIGKPQVSYRETIRTRVNDVEGKHAKQSGGRGQYGHVVIDLYPLDPEGPGYEFVNEIKGGVIPGEYIPAVDKGIQEQLKSGPLAGYPVVDLGVRLHFGSYHDVDSSELAFKLAASLAFKAAFSKANPVLLEPIMKVEVETPPEYVGDVIGDLSRRRAMVNGQEANEFVVKIDAEVPLSEMFGYATDLRSQTQGRASYSMEPLKYAEAPTSVAAAVIEARKK</sequence>
<name>EFG_HAEIE</name>
<accession>A5U9R0</accession>
<comment type="function">
    <text evidence="1">Catalyzes the GTP-dependent ribosomal translocation step during translation elongation. During this step, the ribosome changes from the pre-translocational (PRE) to the post-translocational (POST) state as the newly formed A-site-bound peptidyl-tRNA and P-site-bound deacylated tRNA move to the P and E sites, respectively. Catalyzes the coordinated movement of the two tRNA molecules, the mRNA and conformational changes in the ribosome.</text>
</comment>
<comment type="subcellular location">
    <subcellularLocation>
        <location evidence="1">Cytoplasm</location>
    </subcellularLocation>
</comment>
<comment type="similarity">
    <text evidence="1">Belongs to the TRAFAC class translation factor GTPase superfamily. Classic translation factor GTPase family. EF-G/EF-2 subfamily.</text>
</comment>
<keyword id="KW-0963">Cytoplasm</keyword>
<keyword id="KW-0251">Elongation factor</keyword>
<keyword id="KW-0342">GTP-binding</keyword>
<keyword id="KW-0547">Nucleotide-binding</keyword>
<keyword id="KW-0648">Protein biosynthesis</keyword>
<protein>
    <recommendedName>
        <fullName evidence="1">Elongation factor G</fullName>
        <shortName evidence="1">EF-G</shortName>
    </recommendedName>
</protein>
<proteinExistence type="inferred from homology"/>
<gene>
    <name evidence="1" type="primary">fusA</name>
    <name type="ordered locus">CGSHiEE_00065</name>
</gene>
<dbReference type="EMBL" id="CP000671">
    <property type="protein sequence ID" value="ABQ97511.1"/>
    <property type="molecule type" value="Genomic_DNA"/>
</dbReference>
<dbReference type="SMR" id="A5U9R0"/>
<dbReference type="KEGG" id="hip:CGSHiEE_00065"/>
<dbReference type="HOGENOM" id="CLU_002794_4_1_6"/>
<dbReference type="GO" id="GO:0005737">
    <property type="term" value="C:cytoplasm"/>
    <property type="evidence" value="ECO:0007669"/>
    <property type="project" value="UniProtKB-SubCell"/>
</dbReference>
<dbReference type="GO" id="GO:0005525">
    <property type="term" value="F:GTP binding"/>
    <property type="evidence" value="ECO:0007669"/>
    <property type="project" value="UniProtKB-UniRule"/>
</dbReference>
<dbReference type="GO" id="GO:0003924">
    <property type="term" value="F:GTPase activity"/>
    <property type="evidence" value="ECO:0007669"/>
    <property type="project" value="InterPro"/>
</dbReference>
<dbReference type="GO" id="GO:0097216">
    <property type="term" value="F:guanosine tetraphosphate binding"/>
    <property type="evidence" value="ECO:0007669"/>
    <property type="project" value="UniProtKB-ARBA"/>
</dbReference>
<dbReference type="GO" id="GO:0003746">
    <property type="term" value="F:translation elongation factor activity"/>
    <property type="evidence" value="ECO:0007669"/>
    <property type="project" value="UniProtKB-UniRule"/>
</dbReference>
<dbReference type="GO" id="GO:0032790">
    <property type="term" value="P:ribosome disassembly"/>
    <property type="evidence" value="ECO:0007669"/>
    <property type="project" value="TreeGrafter"/>
</dbReference>
<dbReference type="CDD" id="cd01886">
    <property type="entry name" value="EF-G"/>
    <property type="match status" value="1"/>
</dbReference>
<dbReference type="CDD" id="cd16262">
    <property type="entry name" value="EFG_III"/>
    <property type="match status" value="1"/>
</dbReference>
<dbReference type="CDD" id="cd01434">
    <property type="entry name" value="EFG_mtEFG1_IV"/>
    <property type="match status" value="1"/>
</dbReference>
<dbReference type="CDD" id="cd03713">
    <property type="entry name" value="EFG_mtEFG_C"/>
    <property type="match status" value="1"/>
</dbReference>
<dbReference type="CDD" id="cd04088">
    <property type="entry name" value="EFG_mtEFG_II"/>
    <property type="match status" value="1"/>
</dbReference>
<dbReference type="FunFam" id="2.40.30.10:FF:000006">
    <property type="entry name" value="Elongation factor G"/>
    <property type="match status" value="1"/>
</dbReference>
<dbReference type="FunFam" id="3.30.230.10:FF:000003">
    <property type="entry name" value="Elongation factor G"/>
    <property type="match status" value="1"/>
</dbReference>
<dbReference type="FunFam" id="3.30.70.240:FF:000001">
    <property type="entry name" value="Elongation factor G"/>
    <property type="match status" value="1"/>
</dbReference>
<dbReference type="FunFam" id="3.30.70.870:FF:000001">
    <property type="entry name" value="Elongation factor G"/>
    <property type="match status" value="1"/>
</dbReference>
<dbReference type="FunFam" id="3.40.50.300:FF:000029">
    <property type="entry name" value="Elongation factor G"/>
    <property type="match status" value="1"/>
</dbReference>
<dbReference type="Gene3D" id="3.30.230.10">
    <property type="match status" value="1"/>
</dbReference>
<dbReference type="Gene3D" id="3.30.70.240">
    <property type="match status" value="1"/>
</dbReference>
<dbReference type="Gene3D" id="3.30.70.870">
    <property type="entry name" value="Elongation Factor G (Translational Gtpase), domain 3"/>
    <property type="match status" value="1"/>
</dbReference>
<dbReference type="Gene3D" id="3.40.50.300">
    <property type="entry name" value="P-loop containing nucleotide triphosphate hydrolases"/>
    <property type="match status" value="1"/>
</dbReference>
<dbReference type="Gene3D" id="2.40.30.10">
    <property type="entry name" value="Translation factors"/>
    <property type="match status" value="1"/>
</dbReference>
<dbReference type="HAMAP" id="MF_00054_B">
    <property type="entry name" value="EF_G_EF_2_B"/>
    <property type="match status" value="1"/>
</dbReference>
<dbReference type="InterPro" id="IPR041095">
    <property type="entry name" value="EFG_II"/>
</dbReference>
<dbReference type="InterPro" id="IPR009022">
    <property type="entry name" value="EFG_III"/>
</dbReference>
<dbReference type="InterPro" id="IPR035647">
    <property type="entry name" value="EFG_III/V"/>
</dbReference>
<dbReference type="InterPro" id="IPR047872">
    <property type="entry name" value="EFG_IV"/>
</dbReference>
<dbReference type="InterPro" id="IPR035649">
    <property type="entry name" value="EFG_V"/>
</dbReference>
<dbReference type="InterPro" id="IPR000640">
    <property type="entry name" value="EFG_V-like"/>
</dbReference>
<dbReference type="InterPro" id="IPR004161">
    <property type="entry name" value="EFTu-like_2"/>
</dbReference>
<dbReference type="InterPro" id="IPR031157">
    <property type="entry name" value="G_TR_CS"/>
</dbReference>
<dbReference type="InterPro" id="IPR027417">
    <property type="entry name" value="P-loop_NTPase"/>
</dbReference>
<dbReference type="InterPro" id="IPR020568">
    <property type="entry name" value="Ribosomal_Su5_D2-typ_SF"/>
</dbReference>
<dbReference type="InterPro" id="IPR014721">
    <property type="entry name" value="Ribsml_uS5_D2-typ_fold_subgr"/>
</dbReference>
<dbReference type="InterPro" id="IPR005225">
    <property type="entry name" value="Small_GTP-bd"/>
</dbReference>
<dbReference type="InterPro" id="IPR000795">
    <property type="entry name" value="T_Tr_GTP-bd_dom"/>
</dbReference>
<dbReference type="InterPro" id="IPR009000">
    <property type="entry name" value="Transl_B-barrel_sf"/>
</dbReference>
<dbReference type="InterPro" id="IPR004540">
    <property type="entry name" value="Transl_elong_EFG/EF2"/>
</dbReference>
<dbReference type="InterPro" id="IPR005517">
    <property type="entry name" value="Transl_elong_EFG/EF2_IV"/>
</dbReference>
<dbReference type="NCBIfam" id="TIGR00484">
    <property type="entry name" value="EF-G"/>
    <property type="match status" value="1"/>
</dbReference>
<dbReference type="NCBIfam" id="NF009381">
    <property type="entry name" value="PRK12740.1-5"/>
    <property type="match status" value="1"/>
</dbReference>
<dbReference type="NCBIfam" id="TIGR00231">
    <property type="entry name" value="small_GTP"/>
    <property type="match status" value="1"/>
</dbReference>
<dbReference type="PANTHER" id="PTHR43261:SF1">
    <property type="entry name" value="RIBOSOME-RELEASING FACTOR 2, MITOCHONDRIAL"/>
    <property type="match status" value="1"/>
</dbReference>
<dbReference type="PANTHER" id="PTHR43261">
    <property type="entry name" value="TRANSLATION ELONGATION FACTOR G-RELATED"/>
    <property type="match status" value="1"/>
</dbReference>
<dbReference type="Pfam" id="PF00679">
    <property type="entry name" value="EFG_C"/>
    <property type="match status" value="1"/>
</dbReference>
<dbReference type="Pfam" id="PF14492">
    <property type="entry name" value="EFG_III"/>
    <property type="match status" value="1"/>
</dbReference>
<dbReference type="Pfam" id="PF03764">
    <property type="entry name" value="EFG_IV"/>
    <property type="match status" value="1"/>
</dbReference>
<dbReference type="Pfam" id="PF00009">
    <property type="entry name" value="GTP_EFTU"/>
    <property type="match status" value="1"/>
</dbReference>
<dbReference type="Pfam" id="PF03144">
    <property type="entry name" value="GTP_EFTU_D2"/>
    <property type="match status" value="1"/>
</dbReference>
<dbReference type="PRINTS" id="PR00315">
    <property type="entry name" value="ELONGATNFCT"/>
</dbReference>
<dbReference type="SMART" id="SM00838">
    <property type="entry name" value="EFG_C"/>
    <property type="match status" value="1"/>
</dbReference>
<dbReference type="SMART" id="SM00889">
    <property type="entry name" value="EFG_IV"/>
    <property type="match status" value="1"/>
</dbReference>
<dbReference type="SUPFAM" id="SSF54980">
    <property type="entry name" value="EF-G C-terminal domain-like"/>
    <property type="match status" value="2"/>
</dbReference>
<dbReference type="SUPFAM" id="SSF52540">
    <property type="entry name" value="P-loop containing nucleoside triphosphate hydrolases"/>
    <property type="match status" value="1"/>
</dbReference>
<dbReference type="SUPFAM" id="SSF54211">
    <property type="entry name" value="Ribosomal protein S5 domain 2-like"/>
    <property type="match status" value="1"/>
</dbReference>
<dbReference type="SUPFAM" id="SSF50447">
    <property type="entry name" value="Translation proteins"/>
    <property type="match status" value="1"/>
</dbReference>
<dbReference type="PROSITE" id="PS00301">
    <property type="entry name" value="G_TR_1"/>
    <property type="match status" value="1"/>
</dbReference>
<dbReference type="PROSITE" id="PS51722">
    <property type="entry name" value="G_TR_2"/>
    <property type="match status" value="1"/>
</dbReference>
<reference key="1">
    <citation type="journal article" date="2007" name="Genome Biol.">
        <title>Characterization and modeling of the Haemophilus influenzae core and supragenomes based on the complete genomic sequences of Rd and 12 clinical nontypeable strains.</title>
        <authorList>
            <person name="Hogg J.S."/>
            <person name="Hu F.Z."/>
            <person name="Janto B."/>
            <person name="Boissy R."/>
            <person name="Hayes J."/>
            <person name="Keefe R."/>
            <person name="Post J.C."/>
            <person name="Ehrlich G.D."/>
        </authorList>
    </citation>
    <scope>NUCLEOTIDE SEQUENCE [LARGE SCALE GENOMIC DNA]</scope>
    <source>
        <strain>PittEE</strain>
    </source>
</reference>
<organism>
    <name type="scientific">Haemophilus influenzae (strain PittEE)</name>
    <dbReference type="NCBI Taxonomy" id="374930"/>
    <lineage>
        <taxon>Bacteria</taxon>
        <taxon>Pseudomonadati</taxon>
        <taxon>Pseudomonadota</taxon>
        <taxon>Gammaproteobacteria</taxon>
        <taxon>Pasteurellales</taxon>
        <taxon>Pasteurellaceae</taxon>
        <taxon>Haemophilus</taxon>
    </lineage>
</organism>